<name>SEC16_EMENI</name>
<feature type="chain" id="PRO_0000295537" description="COPII coat assembly protein sec16">
    <location>
        <begin position="1"/>
        <end position="1947"/>
    </location>
</feature>
<feature type="region of interest" description="Disordered" evidence="2">
    <location>
        <begin position="1"/>
        <end position="57"/>
    </location>
</feature>
<feature type="region of interest" description="Disordered" evidence="2">
    <location>
        <begin position="347"/>
        <end position="385"/>
    </location>
</feature>
<feature type="region of interest" description="Disordered" evidence="2">
    <location>
        <begin position="465"/>
        <end position="956"/>
    </location>
</feature>
<feature type="region of interest" description="Disordered" evidence="2">
    <location>
        <begin position="1462"/>
        <end position="1760"/>
    </location>
</feature>
<feature type="region of interest" description="Disordered" evidence="2">
    <location>
        <begin position="1773"/>
        <end position="1904"/>
    </location>
</feature>
<feature type="compositionally biased region" description="Polar residues" evidence="2">
    <location>
        <begin position="361"/>
        <end position="370"/>
    </location>
</feature>
<feature type="compositionally biased region" description="Acidic residues" evidence="2">
    <location>
        <begin position="465"/>
        <end position="474"/>
    </location>
</feature>
<feature type="compositionally biased region" description="Polar residues" evidence="2">
    <location>
        <begin position="515"/>
        <end position="527"/>
    </location>
</feature>
<feature type="compositionally biased region" description="Polar residues" evidence="2">
    <location>
        <begin position="538"/>
        <end position="550"/>
    </location>
</feature>
<feature type="compositionally biased region" description="Basic and acidic residues" evidence="2">
    <location>
        <begin position="565"/>
        <end position="574"/>
    </location>
</feature>
<feature type="compositionally biased region" description="Pro residues" evidence="2">
    <location>
        <begin position="603"/>
        <end position="619"/>
    </location>
</feature>
<feature type="compositionally biased region" description="Polar residues" evidence="2">
    <location>
        <begin position="696"/>
        <end position="711"/>
    </location>
</feature>
<feature type="compositionally biased region" description="Pro residues" evidence="2">
    <location>
        <begin position="741"/>
        <end position="766"/>
    </location>
</feature>
<feature type="compositionally biased region" description="Polar residues" evidence="2">
    <location>
        <begin position="774"/>
        <end position="798"/>
    </location>
</feature>
<feature type="compositionally biased region" description="Polar residues" evidence="2">
    <location>
        <begin position="823"/>
        <end position="833"/>
    </location>
</feature>
<feature type="compositionally biased region" description="Polar residues" evidence="2">
    <location>
        <begin position="840"/>
        <end position="864"/>
    </location>
</feature>
<feature type="compositionally biased region" description="Pro residues" evidence="2">
    <location>
        <begin position="893"/>
        <end position="904"/>
    </location>
</feature>
<feature type="compositionally biased region" description="Low complexity" evidence="2">
    <location>
        <begin position="905"/>
        <end position="918"/>
    </location>
</feature>
<feature type="compositionally biased region" description="Polar residues" evidence="2">
    <location>
        <begin position="938"/>
        <end position="956"/>
    </location>
</feature>
<feature type="compositionally biased region" description="Polar residues" evidence="2">
    <location>
        <begin position="1483"/>
        <end position="1495"/>
    </location>
</feature>
<feature type="compositionally biased region" description="Low complexity" evidence="2">
    <location>
        <begin position="1519"/>
        <end position="1530"/>
    </location>
</feature>
<feature type="compositionally biased region" description="Polar residues" evidence="2">
    <location>
        <begin position="1538"/>
        <end position="1547"/>
    </location>
</feature>
<feature type="compositionally biased region" description="Polar residues" evidence="2">
    <location>
        <begin position="1580"/>
        <end position="1591"/>
    </location>
</feature>
<feature type="compositionally biased region" description="Polar residues" evidence="2">
    <location>
        <begin position="1604"/>
        <end position="1613"/>
    </location>
</feature>
<feature type="compositionally biased region" description="Basic and acidic residues" evidence="2">
    <location>
        <begin position="1694"/>
        <end position="1727"/>
    </location>
</feature>
<feature type="compositionally biased region" description="Low complexity" evidence="2">
    <location>
        <begin position="1854"/>
        <end position="1867"/>
    </location>
</feature>
<keyword id="KW-0072">Autophagy</keyword>
<keyword id="KW-0256">Endoplasmic reticulum</keyword>
<keyword id="KW-0931">ER-Golgi transport</keyword>
<keyword id="KW-0472">Membrane</keyword>
<keyword id="KW-0653">Protein transport</keyword>
<keyword id="KW-1185">Reference proteome</keyword>
<keyword id="KW-0813">Transport</keyword>
<accession>Q5AYL5</accession>
<accession>C8V152</accession>
<sequence length="1947" mass="207506">MENSNSEASAVWNPALRTDDNHETAATVEEISAPVSSDVAPLTPKATTANTDIVPDAIDSINTESPAREETAELPLNEHTHTVPGAAEPVNVGSAGFIETAEAPPTAIDDPGAVPVAVSPNGETSAPAIATDVTSVSENTVPDVTESSSVEPTALIEIAQAESATGEDFNQAETREEFREEAAELFSAAADENQETDAFKPQAELAAAPGDGYNNLQSMQEEHVQEGQTHQLEIDTSVNAAQGSSDYPTPGWVYQQGIADHATPIDGELRSTNHDLWGSPKSVDNGEDRFFDQLRTQTKPIYFPSEESRFEEGVPLLDGSAEAPVEAAPVEATPVEQAVPQPGQLDRVFEGDEDEDDGFFSSAQQPATENEPQEPVHIQRKSTSQVLDSLNTNRDGVHSPLSPTAEEFNDIIAAAASKSPENVQEPASEEDLAARWQAELSDDDLEVAPVEEDLAAKWQAELDDDDLLLEDEPSDLAQNTAAEVVNGHGVEPNLQALGSPFGTPQNPSKPKPAQSVYTPHQPSTADLVQSVPIPGATPLSSSAPYSTSYFQPRPEPPAPAVRAESFAERPKEGYKSPYDLPEDLAPRRKPATKPVVSSAANVPAPPPRSSSFTAPPPPQSSSGVPVPPINAATLPPASKPNAPVASAPKNFYEELPLPPVRPRSRPAESGRYTPKFNTASPAFVQPPPAAHPVTNPYAQLSGDTPQSQLQQPEKLGPYANNVGSSSQSAPAVPPINSRYSPKPPTLQPGVKPPASPRYSPAPPPPAAASAPLQRYTSQPSVIPGQTVTLPFQPRTSSPLAHHEKVSYQPNEASRKPSFPQPTSPVTGQPSHTETAAPMSPRSSQVQASGPSAVDTSSSYQQTSPPRNPYAPPSYLEEFSRRVSHVNNSTPSAYTPPPETPPFVPPRRSQTQSPTQQQSGPRLSVPSVDPLKRPASVHAPSSPTKTSHTYAPMQPSSHIRTISQSLEFIPPSDGQELDPLQRWKGAPIFKFGFGGTVLSSFPKHVPRYSAGQTAPKIKPMPGDVKTTQLKDVISFPETIVRHPGPLRNKSKKKDLVAWLSSRIAAFENEGVPQNLQAYPDSYKRRDEKILLWKAVRVLVEHDGGMQSTPDLQEALRGILFPHLQTNGLEPMYSDSLQSFGAEVINASSLSDSAESKPLSSIRNNLLIGEREKAVWSAADNRLWGHAMIIASTLDKSIWKQVVQEFVRREVRSNSGNPESLAALYEIFAGNFEESVDELVPPSARAGLQMVSKVDGHGPSKDALAGLESWKDTLGLVLSNRSPEDHRALLALGRLLLSYGRIEAAHICLIFSRAAVFGGPDDPQASIVLLGVDHVHSSPTALLDDDAILLTEAYEYATSVLGASPTSTLPHLLALKLVHAWSLTDQGRKSEAQQYCDAITAALKATTKQSGYHHQHLFFGVDELSARLKQTTGDGGSWISKPSMEKVSSSMWNKFSNFVAGDDSDAASTGSGKGGETGFGPFAQISGTPTVSRSPSVTDLYGQYPMPVAQQVPGAGTSRYQPNNQNAPNSSPDQGRGRSSLDSQRSASFGLSYGQRRGSQEYGHPSESPMYGGGPFYGSPTAGYQSTPPQTSYMPLAPVEEDMAQQAYTPPTATPQGLFGHDLPYQPPAQNPFDQSTGPEAPASQHTEADGYMPPTGNTGYEPPASNTLEVEVTEESEDEKPRKKLTMDDEDDDDIAARAEALKKAEKARKDREADEAFRKAAEADAKKPAPAKSSWWGWIKGGNKEEANSGKPIRAKLGEESSFYYDKELKKWVNKKDPNSATPARATPPPPKAMGPPSRAASGSSMPPSGTAGLGSRPPSVAPPPSGSPAPSSLGLPPTPGLGPARSASTGAVPPAGNASSRPGSSAGPPPRPSTSLSHASSIDDLLGAPQARKGATSRGRKKGRIRDLPHLAYRSVYPCIANYQPPYIVVNLHAISSGSMAWLLVL</sequence>
<protein>
    <recommendedName>
        <fullName>COPII coat assembly protein sec16</fullName>
    </recommendedName>
    <alternativeName>
        <fullName>Protein transport protein sec16</fullName>
    </alternativeName>
</protein>
<comment type="function">
    <text evidence="1">Involved in the initiation of assembly of the COPII coat required for the formation of transport vesicles from the endoplasmic reticulum (ER) and the selection of cargo molecules. Also involved in autophagy (By similarity).</text>
</comment>
<comment type="subcellular location">
    <subcellularLocation>
        <location evidence="1">Endoplasmic reticulum membrane</location>
        <topology evidence="1">Peripheral membrane protein</topology>
        <orientation evidence="1">Cytoplasmic side</orientation>
    </subcellularLocation>
</comment>
<comment type="similarity">
    <text evidence="3">Belongs to the SEC16 family.</text>
</comment>
<reference key="1">
    <citation type="journal article" date="2005" name="Nature">
        <title>Sequencing of Aspergillus nidulans and comparative analysis with A. fumigatus and A. oryzae.</title>
        <authorList>
            <person name="Galagan J.E."/>
            <person name="Calvo S.E."/>
            <person name="Cuomo C."/>
            <person name="Ma L.-J."/>
            <person name="Wortman J.R."/>
            <person name="Batzoglou S."/>
            <person name="Lee S.-I."/>
            <person name="Bastuerkmen M."/>
            <person name="Spevak C.C."/>
            <person name="Clutterbuck J."/>
            <person name="Kapitonov V."/>
            <person name="Jurka J."/>
            <person name="Scazzocchio C."/>
            <person name="Farman M.L."/>
            <person name="Butler J."/>
            <person name="Purcell S."/>
            <person name="Harris S."/>
            <person name="Braus G.H."/>
            <person name="Draht O."/>
            <person name="Busch S."/>
            <person name="D'Enfert C."/>
            <person name="Bouchier C."/>
            <person name="Goldman G.H."/>
            <person name="Bell-Pedersen D."/>
            <person name="Griffiths-Jones S."/>
            <person name="Doonan J.H."/>
            <person name="Yu J."/>
            <person name="Vienken K."/>
            <person name="Pain A."/>
            <person name="Freitag M."/>
            <person name="Selker E.U."/>
            <person name="Archer D.B."/>
            <person name="Penalva M.A."/>
            <person name="Oakley B.R."/>
            <person name="Momany M."/>
            <person name="Tanaka T."/>
            <person name="Kumagai T."/>
            <person name="Asai K."/>
            <person name="Machida M."/>
            <person name="Nierman W.C."/>
            <person name="Denning D.W."/>
            <person name="Caddick M.X."/>
            <person name="Hynes M."/>
            <person name="Paoletti M."/>
            <person name="Fischer R."/>
            <person name="Miller B.L."/>
            <person name="Dyer P.S."/>
            <person name="Sachs M.S."/>
            <person name="Osmani S.A."/>
            <person name="Birren B.W."/>
        </authorList>
    </citation>
    <scope>NUCLEOTIDE SEQUENCE [LARGE SCALE GENOMIC DNA]</scope>
    <source>
        <strain>FGSC A4 / ATCC 38163 / CBS 112.46 / NRRL 194 / M139</strain>
    </source>
</reference>
<reference key="2">
    <citation type="journal article" date="2009" name="Fungal Genet. Biol.">
        <title>The 2008 update of the Aspergillus nidulans genome annotation: a community effort.</title>
        <authorList>
            <person name="Wortman J.R."/>
            <person name="Gilsenan J.M."/>
            <person name="Joardar V."/>
            <person name="Deegan J."/>
            <person name="Clutterbuck J."/>
            <person name="Andersen M.R."/>
            <person name="Archer D."/>
            <person name="Bencina M."/>
            <person name="Braus G."/>
            <person name="Coutinho P."/>
            <person name="von Dohren H."/>
            <person name="Doonan J."/>
            <person name="Driessen A.J."/>
            <person name="Durek P."/>
            <person name="Espeso E."/>
            <person name="Fekete E."/>
            <person name="Flipphi M."/>
            <person name="Estrada C.G."/>
            <person name="Geysens S."/>
            <person name="Goldman G."/>
            <person name="de Groot P.W."/>
            <person name="Hansen K."/>
            <person name="Harris S.D."/>
            <person name="Heinekamp T."/>
            <person name="Helmstaedt K."/>
            <person name="Henrissat B."/>
            <person name="Hofmann G."/>
            <person name="Homan T."/>
            <person name="Horio T."/>
            <person name="Horiuchi H."/>
            <person name="James S."/>
            <person name="Jones M."/>
            <person name="Karaffa L."/>
            <person name="Karanyi Z."/>
            <person name="Kato M."/>
            <person name="Keller N."/>
            <person name="Kelly D.E."/>
            <person name="Kiel J.A."/>
            <person name="Kim J.M."/>
            <person name="van der Klei I.J."/>
            <person name="Klis F.M."/>
            <person name="Kovalchuk A."/>
            <person name="Krasevec N."/>
            <person name="Kubicek C.P."/>
            <person name="Liu B."/>
            <person name="Maccabe A."/>
            <person name="Meyer V."/>
            <person name="Mirabito P."/>
            <person name="Miskei M."/>
            <person name="Mos M."/>
            <person name="Mullins J."/>
            <person name="Nelson D.R."/>
            <person name="Nielsen J."/>
            <person name="Oakley B.R."/>
            <person name="Osmani S.A."/>
            <person name="Pakula T."/>
            <person name="Paszewski A."/>
            <person name="Paulsen I."/>
            <person name="Pilsyk S."/>
            <person name="Pocsi I."/>
            <person name="Punt P.J."/>
            <person name="Ram A.F."/>
            <person name="Ren Q."/>
            <person name="Robellet X."/>
            <person name="Robson G."/>
            <person name="Seiboth B."/>
            <person name="van Solingen P."/>
            <person name="Specht T."/>
            <person name="Sun J."/>
            <person name="Taheri-Talesh N."/>
            <person name="Takeshita N."/>
            <person name="Ussery D."/>
            <person name="vanKuyk P.A."/>
            <person name="Visser H."/>
            <person name="van de Vondervoort P.J."/>
            <person name="de Vries R.P."/>
            <person name="Walton J."/>
            <person name="Xiang X."/>
            <person name="Xiong Y."/>
            <person name="Zeng A.P."/>
            <person name="Brandt B.W."/>
            <person name="Cornell M.J."/>
            <person name="van den Hondel C.A."/>
            <person name="Visser J."/>
            <person name="Oliver S.G."/>
            <person name="Turner G."/>
        </authorList>
    </citation>
    <scope>GENOME REANNOTATION</scope>
    <source>
        <strain>FGSC A4 / ATCC 38163 / CBS 112.46 / NRRL 194 / M139</strain>
    </source>
</reference>
<proteinExistence type="inferred from homology"/>
<organism>
    <name type="scientific">Emericella nidulans (strain FGSC A4 / ATCC 38163 / CBS 112.46 / NRRL 194 / M139)</name>
    <name type="common">Aspergillus nidulans</name>
    <dbReference type="NCBI Taxonomy" id="227321"/>
    <lineage>
        <taxon>Eukaryota</taxon>
        <taxon>Fungi</taxon>
        <taxon>Dikarya</taxon>
        <taxon>Ascomycota</taxon>
        <taxon>Pezizomycotina</taxon>
        <taxon>Eurotiomycetes</taxon>
        <taxon>Eurotiomycetidae</taxon>
        <taxon>Eurotiales</taxon>
        <taxon>Aspergillaceae</taxon>
        <taxon>Aspergillus</taxon>
        <taxon>Aspergillus subgen. Nidulantes</taxon>
    </lineage>
</organism>
<evidence type="ECO:0000250" key="1"/>
<evidence type="ECO:0000256" key="2">
    <source>
        <dbReference type="SAM" id="MobiDB-lite"/>
    </source>
</evidence>
<evidence type="ECO:0000305" key="3"/>
<gene>
    <name type="primary">sec16</name>
    <name type="ORF">AN6615</name>
</gene>
<dbReference type="EMBL" id="AACD01000110">
    <property type="protein sequence ID" value="EAA58144.1"/>
    <property type="molecule type" value="Genomic_DNA"/>
</dbReference>
<dbReference type="EMBL" id="BN001301">
    <property type="protein sequence ID" value="CBF71102.1"/>
    <property type="molecule type" value="Genomic_DNA"/>
</dbReference>
<dbReference type="RefSeq" id="XP_664219.1">
    <property type="nucleotide sequence ID" value="XM_659127.1"/>
</dbReference>
<dbReference type="FunCoup" id="Q5AYL5">
    <property type="interactions" value="98"/>
</dbReference>
<dbReference type="STRING" id="227321.Q5AYL5"/>
<dbReference type="EnsemblFungi" id="CBF71102">
    <property type="protein sequence ID" value="CBF71102"/>
    <property type="gene ID" value="ANIA_06615"/>
</dbReference>
<dbReference type="KEGG" id="ani:ANIA_06615"/>
<dbReference type="eggNOG" id="KOG1913">
    <property type="taxonomic scope" value="Eukaryota"/>
</dbReference>
<dbReference type="HOGENOM" id="CLU_001147_0_0_1"/>
<dbReference type="InParanoid" id="Q5AYL5"/>
<dbReference type="OMA" id="YKSPYDL"/>
<dbReference type="OrthoDB" id="8918678at2759"/>
<dbReference type="Proteomes" id="UP000000560">
    <property type="component" value="Chromosome I"/>
</dbReference>
<dbReference type="GO" id="GO:0070971">
    <property type="term" value="C:endoplasmic reticulum exit site"/>
    <property type="evidence" value="ECO:0000318"/>
    <property type="project" value="GO_Central"/>
</dbReference>
<dbReference type="GO" id="GO:0005789">
    <property type="term" value="C:endoplasmic reticulum membrane"/>
    <property type="evidence" value="ECO:0007669"/>
    <property type="project" value="UniProtKB-SubCell"/>
</dbReference>
<dbReference type="GO" id="GO:0012507">
    <property type="term" value="C:ER to Golgi transport vesicle membrane"/>
    <property type="evidence" value="ECO:0000318"/>
    <property type="project" value="GO_Central"/>
</dbReference>
<dbReference type="GO" id="GO:0006914">
    <property type="term" value="P:autophagy"/>
    <property type="evidence" value="ECO:0007669"/>
    <property type="project" value="UniProtKB-KW"/>
</dbReference>
<dbReference type="GO" id="GO:0007030">
    <property type="term" value="P:Golgi organization"/>
    <property type="evidence" value="ECO:0000318"/>
    <property type="project" value="GO_Central"/>
</dbReference>
<dbReference type="GO" id="GO:0046907">
    <property type="term" value="P:intracellular transport"/>
    <property type="evidence" value="ECO:0007669"/>
    <property type="project" value="UniProtKB-ARBA"/>
</dbReference>
<dbReference type="GO" id="GO:0070973">
    <property type="term" value="P:protein localization to endoplasmic reticulum exit site"/>
    <property type="evidence" value="ECO:0000318"/>
    <property type="project" value="GO_Central"/>
</dbReference>
<dbReference type="GO" id="GO:0015031">
    <property type="term" value="P:protein transport"/>
    <property type="evidence" value="ECO:0007669"/>
    <property type="project" value="UniProtKB-KW"/>
</dbReference>
<dbReference type="GO" id="GO:0016192">
    <property type="term" value="P:vesicle-mediated transport"/>
    <property type="evidence" value="ECO:0007669"/>
    <property type="project" value="UniProtKB-KW"/>
</dbReference>
<dbReference type="CDD" id="cd09233">
    <property type="entry name" value="ACE1-Sec16-like"/>
    <property type="match status" value="1"/>
</dbReference>
<dbReference type="FunFam" id="1.25.40.1030:FF:000008">
    <property type="entry name" value="Protein transport protein sec16"/>
    <property type="match status" value="1"/>
</dbReference>
<dbReference type="Gene3D" id="1.25.40.1030">
    <property type="match status" value="1"/>
</dbReference>
<dbReference type="InterPro" id="IPR024340">
    <property type="entry name" value="Sec16_CCD"/>
</dbReference>
<dbReference type="InterPro" id="IPR024468">
    <property type="entry name" value="Sec16_N"/>
</dbReference>
<dbReference type="InterPro" id="IPR024298">
    <property type="entry name" value="Sec16_Sec23-bd"/>
</dbReference>
<dbReference type="PANTHER" id="PTHR13402">
    <property type="entry name" value="RGPR-RELATED"/>
    <property type="match status" value="1"/>
</dbReference>
<dbReference type="PANTHER" id="PTHR13402:SF6">
    <property type="entry name" value="SECRETORY 16, ISOFORM I"/>
    <property type="match status" value="1"/>
</dbReference>
<dbReference type="Pfam" id="PF12932">
    <property type="entry name" value="Sec16"/>
    <property type="match status" value="1"/>
</dbReference>
<dbReference type="Pfam" id="PF12935">
    <property type="entry name" value="Sec16_N"/>
    <property type="match status" value="1"/>
</dbReference>
<dbReference type="Pfam" id="PF12931">
    <property type="entry name" value="TPR_Sec16"/>
    <property type="match status" value="1"/>
</dbReference>